<gene>
    <name evidence="18" type="primary">Nrx-1</name>
    <name evidence="14" type="synonym">Dnrx</name>
    <name evidence="18" type="ORF">CG7050</name>
</gene>
<feature type="chain" id="PRO_0000458489" description="Neurexin 1">
    <location>
        <begin position="1"/>
        <end position="1840"/>
    </location>
</feature>
<feature type="topological domain" description="Extracellular" evidence="15">
    <location>
        <begin position="1"/>
        <end position="1696"/>
    </location>
</feature>
<feature type="transmembrane region" description="Helical" evidence="1">
    <location>
        <begin position="1697"/>
        <end position="1717"/>
    </location>
</feature>
<feature type="topological domain" description="Cytoplasmic" evidence="8">
    <location>
        <begin position="1718"/>
        <end position="1840"/>
    </location>
</feature>
<feature type="domain" description="Laminin G-like 1" evidence="3">
    <location>
        <begin position="104"/>
        <end position="289"/>
    </location>
</feature>
<feature type="domain" description="EGF-like 1" evidence="2">
    <location>
        <begin position="309"/>
        <end position="347"/>
    </location>
</feature>
<feature type="domain" description="Laminin G-like 2" evidence="3">
    <location>
        <begin position="352"/>
        <end position="547"/>
    </location>
</feature>
<feature type="domain" description="Laminin G-like 3" evidence="3">
    <location>
        <begin position="554"/>
        <end position="739"/>
    </location>
</feature>
<feature type="domain" description="EGF-like 2" evidence="2">
    <location>
        <begin position="742"/>
        <end position="779"/>
    </location>
</feature>
<feature type="domain" description="Laminin G-like 4" evidence="3">
    <location>
        <begin position="784"/>
        <end position="964"/>
    </location>
</feature>
<feature type="domain" description="Laminin G-like 5" evidence="3">
    <location>
        <begin position="982"/>
        <end position="1158"/>
    </location>
</feature>
<feature type="domain" description="EGF-like 3" evidence="2">
    <location>
        <begin position="1160"/>
        <end position="1197"/>
    </location>
</feature>
<feature type="domain" description="Laminin G-like 6" evidence="3">
    <location>
        <begin position="1201"/>
        <end position="1416"/>
    </location>
</feature>
<feature type="region of interest" description="Disordered" evidence="4">
    <location>
        <begin position="1"/>
        <end position="50"/>
    </location>
</feature>
<feature type="region of interest" description="Disordered" evidence="4">
    <location>
        <begin position="1411"/>
        <end position="1651"/>
    </location>
</feature>
<feature type="region of interest" description="Disordered" evidence="4">
    <location>
        <begin position="1737"/>
        <end position="1840"/>
    </location>
</feature>
<feature type="short sequence motif" description="PDZ domain binding" evidence="7">
    <location>
        <begin position="1837"/>
        <end position="1840"/>
    </location>
</feature>
<feature type="compositionally biased region" description="Basic and acidic residues" evidence="4">
    <location>
        <begin position="24"/>
        <end position="37"/>
    </location>
</feature>
<feature type="compositionally biased region" description="Low complexity" evidence="4">
    <location>
        <begin position="1447"/>
        <end position="1472"/>
    </location>
</feature>
<feature type="compositionally biased region" description="Polar residues" evidence="4">
    <location>
        <begin position="1491"/>
        <end position="1527"/>
    </location>
</feature>
<feature type="compositionally biased region" description="Low complexity" evidence="4">
    <location>
        <begin position="1528"/>
        <end position="1600"/>
    </location>
</feature>
<feature type="compositionally biased region" description="Basic and acidic residues" evidence="4">
    <location>
        <begin position="1632"/>
        <end position="1646"/>
    </location>
</feature>
<feature type="compositionally biased region" description="Polar residues" evidence="4">
    <location>
        <begin position="1747"/>
        <end position="1757"/>
    </location>
</feature>
<feature type="compositionally biased region" description="Low complexity" evidence="4">
    <location>
        <begin position="1774"/>
        <end position="1787"/>
    </location>
</feature>
<feature type="compositionally biased region" description="Gly residues" evidence="4">
    <location>
        <begin position="1788"/>
        <end position="1813"/>
    </location>
</feature>
<feature type="compositionally biased region" description="Basic and acidic residues" evidence="4">
    <location>
        <begin position="1831"/>
        <end position="1840"/>
    </location>
</feature>
<feature type="binding site" evidence="12 20">
    <location>
        <position position="1831"/>
    </location>
    <ligand>
        <name>Zn(2+)</name>
        <dbReference type="ChEBI" id="CHEBI:29105"/>
    </ligand>
</feature>
<feature type="binding site" evidence="12 20">
    <location>
        <position position="1834"/>
    </location>
    <ligand>
        <name>Zn(2+)</name>
        <dbReference type="ChEBI" id="CHEBI:29105"/>
    </ligand>
</feature>
<feature type="disulfide bond" evidence="2">
    <location>
        <begin position="313"/>
        <end position="325"/>
    </location>
</feature>
<feature type="disulfide bond" evidence="2">
    <location>
        <begin position="319"/>
        <end position="334"/>
    </location>
</feature>
<feature type="disulfide bond" evidence="2">
    <location>
        <begin position="336"/>
        <end position="346"/>
    </location>
</feature>
<feature type="disulfide bond" evidence="3">
    <location>
        <begin position="511"/>
        <end position="547"/>
    </location>
</feature>
<feature type="disulfide bond" evidence="3">
    <location>
        <begin position="710"/>
        <end position="739"/>
    </location>
</feature>
<feature type="disulfide bond" evidence="2">
    <location>
        <begin position="746"/>
        <end position="757"/>
    </location>
</feature>
<feature type="disulfide bond" evidence="2">
    <location>
        <begin position="751"/>
        <end position="766"/>
    </location>
</feature>
<feature type="disulfide bond" evidence="2">
    <location>
        <begin position="768"/>
        <end position="778"/>
    </location>
</feature>
<feature type="disulfide bond" evidence="3">
    <location>
        <begin position="1130"/>
        <end position="1158"/>
    </location>
</feature>
<feature type="disulfide bond" evidence="2">
    <location>
        <begin position="1164"/>
        <end position="1175"/>
    </location>
</feature>
<feature type="disulfide bond" evidence="2">
    <location>
        <begin position="1169"/>
        <end position="1184"/>
    </location>
</feature>
<feature type="disulfide bond" evidence="2">
    <location>
        <begin position="1186"/>
        <end position="1196"/>
    </location>
</feature>
<feature type="mutagenesis site" description="Does not affect localization to synapse." evidence="7">
    <location>
        <begin position="1837"/>
        <end position="1840"/>
    </location>
</feature>
<feature type="helix" evidence="21">
    <location>
        <begin position="1832"/>
        <end position="1834"/>
    </location>
</feature>
<keyword id="KW-0002">3D-structure</keyword>
<keyword id="KW-1003">Cell membrane</keyword>
<keyword id="KW-0966">Cell projection</keyword>
<keyword id="KW-1015">Disulfide bond</keyword>
<keyword id="KW-0245">EGF-like domain</keyword>
<keyword id="KW-0472">Membrane</keyword>
<keyword id="KW-0479">Metal-binding</keyword>
<keyword id="KW-0628">Postsynaptic cell membrane</keyword>
<keyword id="KW-1185">Reference proteome</keyword>
<keyword id="KW-0770">Synapse</keyword>
<keyword id="KW-0812">Transmembrane</keyword>
<keyword id="KW-1133">Transmembrane helix</keyword>
<keyword id="KW-0862">Zinc</keyword>
<comment type="function">
    <text evidence="5 6 7 8 9 10 11 12">Neuronal cell adhesion protein involved in synapse formation, development of synaptic active zones, synaptic regulation and visual function (PubMed:17498701, PubMed:17785181, PubMed:19379781, PubMed:20559439, PubMed:22864612, PubMed:23352167, PubMed:26201245, PubMed:26471740). Plays a role in cell adhesion between the pre- and the postsynaptic cell (PubMed:17785181). Required for proper proliferation of synaptic boutons during larval development, a process necessary for coordinated matching of pre-and postsynaptic compartments (PubMed:17785181). Promotes presynaptic active zone formation and neurotransmitter release (PubMed:20559439). Spn/Spinophilin fine-tunes nrx-1/nlg1 signaling at the pre-synapse to control active zone number and functionality and thereby optimizing action potential-induced exocytosis (PubMed:26471740). Required for synapse formation in central nervous system (PubMed:17498701). By regulating synapse formation, may play a role in larval associative learning (PubMed:17498701, PubMed:19379781). Together with RhoGAP100F/syd-1, controls synapse formation at the neuromuscular junction (PubMed:22864612). Essential for synaptic vesicle cycling, which plays critical roles in neurotransmission at neuromuscular junctions (NMJ) (PubMed:19379781). Regulated and restricts formation of glutamate receptor clusters (PubMed:20559439). Mediates retinoid transport and subsequent rhodopsin maturation and may regulate lipoprotein function; thereby playing a role in vision (PubMed:23352167). Regulates sleep, circadian rhythm and synaptic plasticity (PubMed:26201245). Together with CASK, required for locomotion (PubMed:19379781).</text>
</comment>
<comment type="subunit">
    <text evidence="7 9 10 12">Interacts (via C-terminal PDZ binding motif) with CASK (via PDZ domain) (PubMed:19379781). Interacts (via cytoplasmic domain) with apolpp/ApoLI; the interaction supports apolpp/ApoLI protein stability (PubMed:23352167). Interact (via cytoplasmic domain) with Spn/Spinophilin (PubMed:26471740). Interacts with RhoGAP100F/Syd-1 (via PDZ domain); RhoGAP100F/Syd-1 may recruit Nrx-1 to the presynaptic active zone (PubMed:22864612).</text>
</comment>
<comment type="subcellular location">
    <subcellularLocation>
        <location evidence="7">Synaptic cell membrane</location>
    </subcellularLocation>
    <subcellularLocation>
        <location evidence="6 8 9">Presynaptic cell membrane</location>
    </subcellularLocation>
    <subcellularLocation>
        <location evidence="8">Postsynaptic cell membrane</location>
    </subcellularLocation>
    <text evidence="6 7 8">Localized to presynaptic active zone (PubMed:17785181). Synapse localization does not depend on interaction with CASK (PubMed:19379781). Present in both presynaptic nerve terminals and postsynaptic muscle (PubMed:20559439).</text>
</comment>
<comment type="tissue specificity">
    <text evidence="5 10">Expressed in brain, with expression in medulla, lamina, lobula, lobula plate, mushroom body and antennal lobe, and in retina (at protein level) (PubMed:17498701, PubMed:23352167). Expressed in rabdomere of photoreceptor cells (at protein level) (PubMed:23352167).</text>
</comment>
<comment type="developmental stage">
    <text evidence="5 6 7 8">Enriched in brain and ventral nerve cord in stage 17 embryos (at protein level) (PubMed:17498701). Expressed in embryonic neuropil regions of the brain and ventral nerve cord, axon tracts of the ventral nerve cord, and motor axons (at protein level) (PubMed:17785181). Expressed in embryonic and larval neuromuscular junctions (at protein level) (PubMed:19379781, PubMed:20559439). Expressed in mushroom body in larval brain (at protein level) (PubMed:17498701). Expressed in glutamatergic type I boutons of the larval body wall muscles (at protein level) (PubMed:17785181, PubMed:19379781). In the larval brain, expressed in neuropil of brain and ventral nerve cord (at protein level) (PubMed:19379781). Expressed in central and peripheral nervous system during early embryogenesis (PubMed:17498701, PubMed:17785181). Expressed in the embryonic nervous system and body wall muscles, including individual ventral longitudinal muscles 6 and 7 (PubMed:20559439). Expressed in central neurons during embryogenesis beginning at late stage 14 until stages 16 and 17 (PubMed:17785181).</text>
</comment>
<comment type="domain">
    <text evidence="10">The intracellular region is required for chromophore generation and subsequent rhodopsin 1 maturation.</text>
</comment>
<comment type="disruption phenotype">
    <text evidence="5 6 7 8 9 10 11">Viable and fertile albeit with reduced lifespan (PubMed:17498701, PubMed:19379781). Reduced synapse number and impaired synaptic transmission (PubMed:19379781). Neuromuscular junction (NMJ) synapses appear relatively normal, but pre- and postsynaptic densities are incompletely apposed (PubMed:20559439). Reduced active zone formation in NMJs during embryogenesis (PubMed:20559439). Reduced excitatory junction current amplitudes in embryonic NMJs due to fewer synapses (PubMed:20559439). Shortened axon branches with fewer boutons in larval NMJs (PubMed:17785181). Long intervening axon stretches devoid of synaptic boutons in NMJ branches (PubMed:17785181). Increase in number of GluRIIA clusters (PubMed:20559439). Loss of normal proliferation of synaptic boutons at glutamatergic neuromuscular junctions (PubMed:17785181). Impairments in larval learning (PubMed:17498701). Fragmented sleep and altered circadian rhythm, animals sleep more at dusk (PubMed:26201245). Exhibit much weaker phototaxis toward dim light as compared to wild-type controls (PubMed:23352167). Light sensitivity of photoreceptors is decreased by approximately 10,000-fold (PubMed:23352167). Absence of blue light-induced prolonged depolarization afterpotential (PDA) (PubMed:23352167). Reduced ninaE/Rh1 protein levels, and a portion of ninaE/Rh1 existing in an immature form, due to a reduction in chromophore levels (PubMed:23352167). Defects in ninaE/Rh1 maturation, possibly as a consequence of a reduction in the chromophore levels (PubMed:23352167). Reduced protein levels of apolpp/ApoLI and apolpp/ApoLII (PubMed:23352167). Reduced synaptic bouton numbers in neuromuscular junctions (NMJs) (PubMed:22864612). Defects in the organization of the remaining active zones in NMJs (PubMed:22864612). Increased mobility of Liprin-alpha clusters (PubMed:22864612). Deficit in early GluRIIA incorporation in postsynapse assembly (PubMed:22864612). Reduced locomotor activity (PubMed:17785181). Abnormalities in the distribution of synaptic vesicle and active zone proteins, as well as glutamate receptor (GluR) clusters in NMJs (PubMed:17785181). Mislocalization of Syt/synaptotagmin and brp/bruchpilot in motor axons instead of presynaptic terminal location (PubMed:17785181). Enlarged serine/threonine-protein kinase Pak, GluRIIA and GluRIIC/GluRIII clusters at synaptic boutons (PubMed:17785181). Synapses within synaptic boutons are dramatically altered, showing sites of presynaptic membrane detachment, abnormally long active zones, and increased number of T-bars (PubMed:17785181). Structural abnormalities in active zones and postsynaptic densities (PSDs) of type Ib boutons in NMJS (PubMed:17785181). Pre-synaptic densities (PRDs) and apposed PSDs are over 60% longer than in wild type animals (PubMed:17785181). Reduced synaptic transmission (PubMed:17785181). Detachment of PRD from the PSD, with bleb-like invaginations at the PRDs (PubMed:17785181). Change in the rate of Ca(2+) dependency of neurotransmitter release (PubMed:17785181).</text>
</comment>
<comment type="similarity">
    <text evidence="15">Belongs to the neurexin family.</text>
</comment>
<accession>Q3KN41</accession>
<dbReference type="EMBL" id="BT023898">
    <property type="protein sequence ID" value="ABA81832.1"/>
    <property type="molecule type" value="mRNA"/>
</dbReference>
<dbReference type="EMBL" id="AE014297">
    <property type="protein sequence ID" value="ACZ94983.1"/>
    <property type="molecule type" value="Genomic_DNA"/>
</dbReference>
<dbReference type="EMBL" id="AE014297">
    <property type="protein sequence ID" value="AGB96218.1"/>
    <property type="molecule type" value="Genomic_DNA"/>
</dbReference>
<dbReference type="EMBL" id="AE014297">
    <property type="protein sequence ID" value="AGB96222.1"/>
    <property type="molecule type" value="Genomic_DNA"/>
</dbReference>
<dbReference type="EMBL" id="AE014297">
    <property type="protein sequence ID" value="AHN57466.1"/>
    <property type="molecule type" value="Genomic_DNA"/>
</dbReference>
<dbReference type="RefSeq" id="NP_001163687.1">
    <property type="nucleotide sequence ID" value="NM_001170216.3"/>
</dbReference>
<dbReference type="RefSeq" id="NP_001262838.1">
    <property type="nucleotide sequence ID" value="NM_001275909.2"/>
</dbReference>
<dbReference type="RefSeq" id="NP_001262842.1">
    <property type="nucleotide sequence ID" value="NM_001275913.2"/>
</dbReference>
<dbReference type="RefSeq" id="NP_001287467.1">
    <property type="nucleotide sequence ID" value="NM_001300538.1"/>
</dbReference>
<dbReference type="PDB" id="4XHV">
    <property type="method" value="X-ray"/>
    <property type="resolution" value="1.23 A"/>
    <property type="chains" value="B=1831-1840"/>
</dbReference>
<dbReference type="PDBsum" id="4XHV"/>
<dbReference type="SMR" id="Q3KN41"/>
<dbReference type="GlyGen" id="Q3KN41">
    <property type="glycosylation" value="3 sites"/>
</dbReference>
<dbReference type="PaxDb" id="7227-FBpp0290700"/>
<dbReference type="DNASU" id="42646"/>
<dbReference type="EnsemblMetazoa" id="FBtr0301485">
    <property type="protein sequence ID" value="FBpp0290700"/>
    <property type="gene ID" value="FBgn0038975"/>
</dbReference>
<dbReference type="EnsemblMetazoa" id="FBtr0334608">
    <property type="protein sequence ID" value="FBpp0306675"/>
    <property type="gene ID" value="FBgn0038975"/>
</dbReference>
<dbReference type="EnsemblMetazoa" id="FBtr0334612">
    <property type="protein sequence ID" value="FBpp0306679"/>
    <property type="gene ID" value="FBgn0038975"/>
</dbReference>
<dbReference type="EnsemblMetazoa" id="FBtr0345228">
    <property type="protein sequence ID" value="FBpp0311420"/>
    <property type="gene ID" value="FBgn0038975"/>
</dbReference>
<dbReference type="GeneID" id="42646"/>
<dbReference type="KEGG" id="dme:Dmel_CG7050"/>
<dbReference type="AGR" id="FB:FBgn0038975"/>
<dbReference type="CTD" id="42646"/>
<dbReference type="FlyBase" id="FBgn0038975">
    <property type="gene designation" value="Nrx-1"/>
</dbReference>
<dbReference type="VEuPathDB" id="VectorBase:FBgn0038975"/>
<dbReference type="eggNOG" id="KOG3514">
    <property type="taxonomic scope" value="Eukaryota"/>
</dbReference>
<dbReference type="GeneTree" id="ENSGT00940000155978"/>
<dbReference type="OrthoDB" id="6275838at2759"/>
<dbReference type="BioGRID-ORCS" id="42646">
    <property type="hits" value="0 hits in 3 CRISPR screens"/>
</dbReference>
<dbReference type="ChiTaRS" id="Nrx-1">
    <property type="organism name" value="fly"/>
</dbReference>
<dbReference type="EvolutionaryTrace" id="Q3KN41"/>
<dbReference type="GenomeRNAi" id="42646"/>
<dbReference type="PRO" id="PR:Q3KN41"/>
<dbReference type="Proteomes" id="UP000000803">
    <property type="component" value="Chromosome 3R"/>
</dbReference>
<dbReference type="Bgee" id="FBgn0038975">
    <property type="expression patterns" value="Expressed in gustatory receptor neuron (Drosophila) in insect leg and 206 other cell types or tissues"/>
</dbReference>
<dbReference type="ExpressionAtlas" id="Q3KN41">
    <property type="expression patterns" value="baseline and differential"/>
</dbReference>
<dbReference type="GO" id="GO:0031594">
    <property type="term" value="C:neuromuscular junction"/>
    <property type="evidence" value="ECO:0000314"/>
    <property type="project" value="CACAO"/>
</dbReference>
<dbReference type="GO" id="GO:0045211">
    <property type="term" value="C:postsynaptic membrane"/>
    <property type="evidence" value="ECO:0007669"/>
    <property type="project" value="UniProtKB-SubCell"/>
</dbReference>
<dbReference type="GO" id="GO:0042734">
    <property type="term" value="C:presynaptic membrane"/>
    <property type="evidence" value="ECO:0007669"/>
    <property type="project" value="UniProtKB-SubCell"/>
</dbReference>
<dbReference type="GO" id="GO:0061174">
    <property type="term" value="C:type I terminal bouton"/>
    <property type="evidence" value="ECO:0000315"/>
    <property type="project" value="CACAO"/>
</dbReference>
<dbReference type="GO" id="GO:0034185">
    <property type="term" value="F:apolipoprotein binding"/>
    <property type="evidence" value="ECO:0000353"/>
    <property type="project" value="FlyBase"/>
</dbReference>
<dbReference type="GO" id="GO:0046872">
    <property type="term" value="F:metal ion binding"/>
    <property type="evidence" value="ECO:0007669"/>
    <property type="project" value="UniProtKB-KW"/>
</dbReference>
<dbReference type="GO" id="GO:0097109">
    <property type="term" value="F:neuroligin family protein binding"/>
    <property type="evidence" value="ECO:0000353"/>
    <property type="project" value="FlyBase"/>
</dbReference>
<dbReference type="GO" id="GO:0008306">
    <property type="term" value="P:associative learning"/>
    <property type="evidence" value="ECO:0000314"/>
    <property type="project" value="FlyBase"/>
</dbReference>
<dbReference type="GO" id="GO:0007268">
    <property type="term" value="P:chemical synaptic transmission"/>
    <property type="evidence" value="ECO:0000314"/>
    <property type="project" value="FlyBase"/>
</dbReference>
<dbReference type="GO" id="GO:0040011">
    <property type="term" value="P:locomotion"/>
    <property type="evidence" value="ECO:0000315"/>
    <property type="project" value="CACAO"/>
</dbReference>
<dbReference type="GO" id="GO:0007274">
    <property type="term" value="P:neuromuscular synaptic transmission"/>
    <property type="evidence" value="ECO:0000315"/>
    <property type="project" value="CACAO"/>
</dbReference>
<dbReference type="GO" id="GO:1900244">
    <property type="term" value="P:positive regulation of synaptic vesicle endocytosis"/>
    <property type="evidence" value="ECO:0000315"/>
    <property type="project" value="FlyBase"/>
</dbReference>
<dbReference type="GO" id="GO:0040012">
    <property type="term" value="P:regulation of locomotion"/>
    <property type="evidence" value="ECO:0000315"/>
    <property type="project" value="FlyBase"/>
</dbReference>
<dbReference type="GO" id="GO:1900073">
    <property type="term" value="P:regulation of neuromuscular synaptic transmission"/>
    <property type="evidence" value="ECO:0000315"/>
    <property type="project" value="FlyBase"/>
</dbReference>
<dbReference type="GO" id="GO:2000331">
    <property type="term" value="P:regulation of terminal button organization"/>
    <property type="evidence" value="ECO:0000315"/>
    <property type="project" value="CACAO"/>
</dbReference>
<dbReference type="GO" id="GO:0007416">
    <property type="term" value="P:synapse assembly"/>
    <property type="evidence" value="ECO:0000314"/>
    <property type="project" value="FlyBase"/>
</dbReference>
<dbReference type="GO" id="GO:0050808">
    <property type="term" value="P:synapse organization"/>
    <property type="evidence" value="ECO:0000314"/>
    <property type="project" value="FlyBase"/>
</dbReference>
<dbReference type="GO" id="GO:0051124">
    <property type="term" value="P:synaptic assembly at neuromuscular junction"/>
    <property type="evidence" value="ECO:0000315"/>
    <property type="project" value="FlyBase"/>
</dbReference>
<dbReference type="GO" id="GO:0048488">
    <property type="term" value="P:synaptic vesicle endocytosis"/>
    <property type="evidence" value="ECO:0000315"/>
    <property type="project" value="CACAO"/>
</dbReference>
<dbReference type="GO" id="GO:0071938">
    <property type="term" value="P:vitamin A transport"/>
    <property type="evidence" value="ECO:0000315"/>
    <property type="project" value="FlyBase"/>
</dbReference>
<dbReference type="CDD" id="cd00054">
    <property type="entry name" value="EGF_CA"/>
    <property type="match status" value="2"/>
</dbReference>
<dbReference type="CDD" id="cd00110">
    <property type="entry name" value="LamG"/>
    <property type="match status" value="6"/>
</dbReference>
<dbReference type="FunFam" id="2.10.25.10:FF:000015">
    <property type="entry name" value="neurexin-1 isoform X1"/>
    <property type="match status" value="1"/>
</dbReference>
<dbReference type="FunFam" id="2.60.120.200:FF:000004">
    <property type="entry name" value="neurexin-1 isoform X1"/>
    <property type="match status" value="1"/>
</dbReference>
<dbReference type="FunFam" id="2.60.120.200:FF:000005">
    <property type="entry name" value="neurexin-1 isoform X1"/>
    <property type="match status" value="1"/>
</dbReference>
<dbReference type="FunFam" id="2.60.120.200:FF:000153">
    <property type="entry name" value="neurexin-1 isoform X3"/>
    <property type="match status" value="1"/>
</dbReference>
<dbReference type="FunFam" id="2.60.120.200:FF:000166">
    <property type="entry name" value="neurexin-1 isoform X4"/>
    <property type="match status" value="1"/>
</dbReference>
<dbReference type="FunFam" id="2.60.120.200:FF:000170">
    <property type="entry name" value="neurexin-1 isoform X4"/>
    <property type="match status" value="1"/>
</dbReference>
<dbReference type="Gene3D" id="2.60.120.200">
    <property type="match status" value="6"/>
</dbReference>
<dbReference type="Gene3D" id="2.10.25.10">
    <property type="entry name" value="Laminin"/>
    <property type="match status" value="3"/>
</dbReference>
<dbReference type="InterPro" id="IPR013320">
    <property type="entry name" value="ConA-like_dom_sf"/>
</dbReference>
<dbReference type="InterPro" id="IPR000742">
    <property type="entry name" value="EGF-like_dom"/>
</dbReference>
<dbReference type="InterPro" id="IPR001791">
    <property type="entry name" value="Laminin_G"/>
</dbReference>
<dbReference type="InterPro" id="IPR050372">
    <property type="entry name" value="Neurexin-related_CASP"/>
</dbReference>
<dbReference type="PANTHER" id="PTHR15036:SF89">
    <property type="entry name" value="NEUREXIN 1, ISOFORM F"/>
    <property type="match status" value="1"/>
</dbReference>
<dbReference type="PANTHER" id="PTHR15036">
    <property type="entry name" value="PIKACHURIN-LIKE PROTEIN"/>
    <property type="match status" value="1"/>
</dbReference>
<dbReference type="Pfam" id="PF00008">
    <property type="entry name" value="EGF"/>
    <property type="match status" value="1"/>
</dbReference>
<dbReference type="Pfam" id="PF02210">
    <property type="entry name" value="Laminin_G_2"/>
    <property type="match status" value="6"/>
</dbReference>
<dbReference type="SMART" id="SM00181">
    <property type="entry name" value="EGF"/>
    <property type="match status" value="3"/>
</dbReference>
<dbReference type="SMART" id="SM00282">
    <property type="entry name" value="LamG"/>
    <property type="match status" value="6"/>
</dbReference>
<dbReference type="SUPFAM" id="SSF49899">
    <property type="entry name" value="Concanavalin A-like lectins/glucanases"/>
    <property type="match status" value="6"/>
</dbReference>
<dbReference type="PROSITE" id="PS50026">
    <property type="entry name" value="EGF_3"/>
    <property type="match status" value="3"/>
</dbReference>
<dbReference type="PROSITE" id="PS50025">
    <property type="entry name" value="LAM_G_DOMAIN"/>
    <property type="match status" value="6"/>
</dbReference>
<name>NRX1_DROME</name>
<evidence type="ECO:0000255" key="1"/>
<evidence type="ECO:0000255" key="2">
    <source>
        <dbReference type="PROSITE-ProRule" id="PRU00076"/>
    </source>
</evidence>
<evidence type="ECO:0000255" key="3">
    <source>
        <dbReference type="PROSITE-ProRule" id="PRU00122"/>
    </source>
</evidence>
<evidence type="ECO:0000256" key="4">
    <source>
        <dbReference type="SAM" id="MobiDB-lite"/>
    </source>
</evidence>
<evidence type="ECO:0000269" key="5">
    <source>
    </source>
</evidence>
<evidence type="ECO:0000269" key="6">
    <source>
    </source>
</evidence>
<evidence type="ECO:0000269" key="7">
    <source>
    </source>
</evidence>
<evidence type="ECO:0000269" key="8">
    <source>
    </source>
</evidence>
<evidence type="ECO:0000269" key="9">
    <source>
    </source>
</evidence>
<evidence type="ECO:0000269" key="10">
    <source>
    </source>
</evidence>
<evidence type="ECO:0000269" key="11">
    <source>
    </source>
</evidence>
<evidence type="ECO:0000269" key="12">
    <source>
    </source>
</evidence>
<evidence type="ECO:0000303" key="13">
    <source>
    </source>
</evidence>
<evidence type="ECO:0000303" key="14">
    <source>
    </source>
</evidence>
<evidence type="ECO:0000305" key="15"/>
<evidence type="ECO:0000312" key="16">
    <source>
        <dbReference type="EMBL" id="ABA81832.1"/>
    </source>
</evidence>
<evidence type="ECO:0000312" key="17">
    <source>
        <dbReference type="EMBL" id="ACZ94983.1"/>
    </source>
</evidence>
<evidence type="ECO:0000312" key="18">
    <source>
        <dbReference type="FlyBase" id="FBgn0038975"/>
    </source>
</evidence>
<evidence type="ECO:0000312" key="19">
    <source>
        <dbReference type="Proteomes" id="UP000000803"/>
    </source>
</evidence>
<evidence type="ECO:0007744" key="20">
    <source>
        <dbReference type="PDB" id="4XHV"/>
    </source>
</evidence>
<evidence type="ECO:0007829" key="21">
    <source>
        <dbReference type="PDB" id="4XHV"/>
    </source>
</evidence>
<proteinExistence type="evidence at protein level"/>
<sequence length="1840" mass="199615">MKAPHSATYQDNYADAAMTARTRPSMDMDQQRNRNQAELRLLPAQRTSTSAFESPDLRFNKARRRRRSEQVPPVVVEYRRSYRVLIVSALLVSLAASFVTLSAGFQLDGSQNSFYTFRKWYTGLNGTLELEFKTEQPNGLVLYTDDGGTYDFFELKLVEGALRLRYNLGGGAQIITVGRELHDGHWHKVQVLRNDEQTSLIVDGVSQQRSTKGKEFQFGKFASNSDVYVGGMPNWYSSKLALLALPSVIFEPRFRGAIRNLVYADQPGGSTRRQEIKQQRDIKCGDVPCDHGELPARERPLRGVRGGNTTDACERNDPCQHGGICISTDSGPICECRNLEYDGQYCEKEKAPSEATFRGTQFLSYDLGQTGAEPIVSAQDAISFYFRTRQPNGLLFYTGHGTDYLNLALRDGGVSLTMGLANGKQEMHIKPSKVRFDDHQWHKVTVHRRIQEISSITSFCRLVTVVDDVYTDHSHIAGKFTMLSSSRVYVGGAVNPRALLGARVHTNFVGCLRKVEFSADTLNLNLIDLAKSGSKLIQVAGNLEYQCPSGDPQDPVTFTTRESHLVLPPWETGKQSSISFKFRTKEPNGIIVLATGSKQPRAKNPVLIAIELLNGHIYIHLDLGSGASKVRASRRRVDDGDWHDLILRRNGRDAKVSVDGVWNDFRTPGDGTILELDGHMYLGGVGPAYNSVSWPAAIWTATLRQGFVGCLRDLVLSGKAIDIAAFARVQDSASVKPSCHVQANVCNGNPCLNGGTCLEGWNRPICDCSATLYGGPTCGRELATLAFNGSQHMTIWLGNGQGTKTQTEELVIRFKTSRPAGLLLLTSAESNSPDRLEIALVAGRVRASVRLSDREKNLLAGQSVLNDNNWHTIRFSRRASNLRLQVDGAPPVRGMLSETILGRHSTMEIRSVHLGGLFHAEEEIQMTSTMPNFVGQMQGLVFNGQRYLDIVKSLGPELSALPSATFKLTARFVNSPAGQPYHAATFRSKHSYVGLAMLKAYNSISIDFRFKTVEPNGLLVFNGGRRNDFVAVELVNGHIHYTFDLGDGPVTMRDKSRIHMNDNRWHQVSIRRPGPKTHTLTVDDSFEIISLTGNNMHLELAGILYIGGVFKDMYSKLPASISSRSGFEGCLASLDLGDASPSLTSDAVVPSSLVVSGCEGPTKCSQNACANRGNCVQQWNAYACECDMTSYTGPTCYDESIAYEFGNNKGMVQYTFPENAQADTEEDNIALGFITTRPDAVLLRVESATTQDYMELEIVEGNIFMVYNIGSVDLPLGEIGTKVNDNAYHVVRFQRKGGNATLQLDDYNVQALTPQSHHSTVFNTMSNVQVGGKFSRNGRNRIERPFAGVIAGLSVNKLRILDLAVERDPHITIRGDVQLVTGVLDRNDLQRMQQTPASGYPGALDDLIFSGAGSGCRGDDEDECTPPFESGSGDDLITPVYVPPTKQTTTSQQGNSLSTGGSSSGGVITNGTERACDDEDCVHGSGDYGETTEQFTSTSTARGSESNNEMVTITTTGRSDVTTEQHQGSSSSSSSGSTPSYATTQSSSSSSSGGSAASTPGQVSTTSSVATSSTQRATSSSTSTSSSTTSTTTTTTTTQATPPPEIRSTVTERETTPYDIYIAGGGMGGSGRNDHDRMQLPDEHHPLPPLPPPIPPQDPPPYGPYGGNTYNTNMNNYRPKGKGGRINSIEEERTAMIIGIVAGILIAVVLVILLVLWLKSNGDRGYKTESEKAAAYGSHNPNAALLGNTSTNGSYHQQRQHHMHGGGGGGGAGQQQHHAQQQMHNGHNGNGNGGGGGGGGMMSSGSGSLGYGSDGRPQMAGLVQPKAKKRDSKDVKEWYV</sequence>
<reference evidence="19" key="1">
    <citation type="journal article" date="2000" name="Science">
        <title>The genome sequence of Drosophila melanogaster.</title>
        <authorList>
            <person name="Adams M.D."/>
            <person name="Celniker S.E."/>
            <person name="Holt R.A."/>
            <person name="Evans C.A."/>
            <person name="Gocayne J.D."/>
            <person name="Amanatides P.G."/>
            <person name="Scherer S.E."/>
            <person name="Li P.W."/>
            <person name="Hoskins R.A."/>
            <person name="Galle R.F."/>
            <person name="George R.A."/>
            <person name="Lewis S.E."/>
            <person name="Richards S."/>
            <person name="Ashburner M."/>
            <person name="Henderson S.N."/>
            <person name="Sutton G.G."/>
            <person name="Wortman J.R."/>
            <person name="Yandell M.D."/>
            <person name="Zhang Q."/>
            <person name="Chen L.X."/>
            <person name="Brandon R.C."/>
            <person name="Rogers Y.-H.C."/>
            <person name="Blazej R.G."/>
            <person name="Champe M."/>
            <person name="Pfeiffer B.D."/>
            <person name="Wan K.H."/>
            <person name="Doyle C."/>
            <person name="Baxter E.G."/>
            <person name="Helt G."/>
            <person name="Nelson C.R."/>
            <person name="Miklos G.L.G."/>
            <person name="Abril J.F."/>
            <person name="Agbayani A."/>
            <person name="An H.-J."/>
            <person name="Andrews-Pfannkoch C."/>
            <person name="Baldwin D."/>
            <person name="Ballew R.M."/>
            <person name="Basu A."/>
            <person name="Baxendale J."/>
            <person name="Bayraktaroglu L."/>
            <person name="Beasley E.M."/>
            <person name="Beeson K.Y."/>
            <person name="Benos P.V."/>
            <person name="Berman B.P."/>
            <person name="Bhandari D."/>
            <person name="Bolshakov S."/>
            <person name="Borkova D."/>
            <person name="Botchan M.R."/>
            <person name="Bouck J."/>
            <person name="Brokstein P."/>
            <person name="Brottier P."/>
            <person name="Burtis K.C."/>
            <person name="Busam D.A."/>
            <person name="Butler H."/>
            <person name="Cadieu E."/>
            <person name="Center A."/>
            <person name="Chandra I."/>
            <person name="Cherry J.M."/>
            <person name="Cawley S."/>
            <person name="Dahlke C."/>
            <person name="Davenport L.B."/>
            <person name="Davies P."/>
            <person name="de Pablos B."/>
            <person name="Delcher A."/>
            <person name="Deng Z."/>
            <person name="Mays A.D."/>
            <person name="Dew I."/>
            <person name="Dietz S.M."/>
            <person name="Dodson K."/>
            <person name="Doup L.E."/>
            <person name="Downes M."/>
            <person name="Dugan-Rocha S."/>
            <person name="Dunkov B.C."/>
            <person name="Dunn P."/>
            <person name="Durbin K.J."/>
            <person name="Evangelista C.C."/>
            <person name="Ferraz C."/>
            <person name="Ferriera S."/>
            <person name="Fleischmann W."/>
            <person name="Fosler C."/>
            <person name="Gabrielian A.E."/>
            <person name="Garg N.S."/>
            <person name="Gelbart W.M."/>
            <person name="Glasser K."/>
            <person name="Glodek A."/>
            <person name="Gong F."/>
            <person name="Gorrell J.H."/>
            <person name="Gu Z."/>
            <person name="Guan P."/>
            <person name="Harris M."/>
            <person name="Harris N.L."/>
            <person name="Harvey D.A."/>
            <person name="Heiman T.J."/>
            <person name="Hernandez J.R."/>
            <person name="Houck J."/>
            <person name="Hostin D."/>
            <person name="Houston K.A."/>
            <person name="Howland T.J."/>
            <person name="Wei M.-H."/>
            <person name="Ibegwam C."/>
            <person name="Jalali M."/>
            <person name="Kalush F."/>
            <person name="Karpen G.H."/>
            <person name="Ke Z."/>
            <person name="Kennison J.A."/>
            <person name="Ketchum K.A."/>
            <person name="Kimmel B.E."/>
            <person name="Kodira C.D."/>
            <person name="Kraft C.L."/>
            <person name="Kravitz S."/>
            <person name="Kulp D."/>
            <person name="Lai Z."/>
            <person name="Lasko P."/>
            <person name="Lei Y."/>
            <person name="Levitsky A.A."/>
            <person name="Li J.H."/>
            <person name="Li Z."/>
            <person name="Liang Y."/>
            <person name="Lin X."/>
            <person name="Liu X."/>
            <person name="Mattei B."/>
            <person name="McIntosh T.C."/>
            <person name="McLeod M.P."/>
            <person name="McPherson D."/>
            <person name="Merkulov G."/>
            <person name="Milshina N.V."/>
            <person name="Mobarry C."/>
            <person name="Morris J."/>
            <person name="Moshrefi A."/>
            <person name="Mount S.M."/>
            <person name="Moy M."/>
            <person name="Murphy B."/>
            <person name="Murphy L."/>
            <person name="Muzny D.M."/>
            <person name="Nelson D.L."/>
            <person name="Nelson D.R."/>
            <person name="Nelson K.A."/>
            <person name="Nixon K."/>
            <person name="Nusskern D.R."/>
            <person name="Pacleb J.M."/>
            <person name="Palazzolo M."/>
            <person name="Pittman G.S."/>
            <person name="Pan S."/>
            <person name="Pollard J."/>
            <person name="Puri V."/>
            <person name="Reese M.G."/>
            <person name="Reinert K."/>
            <person name="Remington K."/>
            <person name="Saunders R.D.C."/>
            <person name="Scheeler F."/>
            <person name="Shen H."/>
            <person name="Shue B.C."/>
            <person name="Siden-Kiamos I."/>
            <person name="Simpson M."/>
            <person name="Skupski M.P."/>
            <person name="Smith T.J."/>
            <person name="Spier E."/>
            <person name="Spradling A.C."/>
            <person name="Stapleton M."/>
            <person name="Strong R."/>
            <person name="Sun E."/>
            <person name="Svirskas R."/>
            <person name="Tector C."/>
            <person name="Turner R."/>
            <person name="Venter E."/>
            <person name="Wang A.H."/>
            <person name="Wang X."/>
            <person name="Wang Z.-Y."/>
            <person name="Wassarman D.A."/>
            <person name="Weinstock G.M."/>
            <person name="Weissenbach J."/>
            <person name="Williams S.M."/>
            <person name="Woodage T."/>
            <person name="Worley K.C."/>
            <person name="Wu D."/>
            <person name="Yang S."/>
            <person name="Yao Q.A."/>
            <person name="Ye J."/>
            <person name="Yeh R.-F."/>
            <person name="Zaveri J.S."/>
            <person name="Zhan M."/>
            <person name="Zhang G."/>
            <person name="Zhao Q."/>
            <person name="Zheng L."/>
            <person name="Zheng X.H."/>
            <person name="Zhong F.N."/>
            <person name="Zhong W."/>
            <person name="Zhou X."/>
            <person name="Zhu S.C."/>
            <person name="Zhu X."/>
            <person name="Smith H.O."/>
            <person name="Gibbs R.A."/>
            <person name="Myers E.W."/>
            <person name="Rubin G.M."/>
            <person name="Venter J.C."/>
        </authorList>
    </citation>
    <scope>NUCLEOTIDE SEQUENCE [LARGE SCALE GENOMIC DNA]</scope>
    <source>
        <strain evidence="19">Berkeley</strain>
    </source>
</reference>
<reference evidence="19" key="2">
    <citation type="journal article" date="2002" name="Genome Biol.">
        <title>Annotation of the Drosophila melanogaster euchromatic genome: a systematic review.</title>
        <authorList>
            <person name="Misra S."/>
            <person name="Crosby M.A."/>
            <person name="Mungall C.J."/>
            <person name="Matthews B.B."/>
            <person name="Campbell K.S."/>
            <person name="Hradecky P."/>
            <person name="Huang Y."/>
            <person name="Kaminker J.S."/>
            <person name="Millburn G.H."/>
            <person name="Prochnik S.E."/>
            <person name="Smith C.D."/>
            <person name="Tupy J.L."/>
            <person name="Whitfield E.J."/>
            <person name="Bayraktaroglu L."/>
            <person name="Berman B.P."/>
            <person name="Bettencourt B.R."/>
            <person name="Celniker S.E."/>
            <person name="de Grey A.D.N.J."/>
            <person name="Drysdale R.A."/>
            <person name="Harris N.L."/>
            <person name="Richter J."/>
            <person name="Russo S."/>
            <person name="Schroeder A.J."/>
            <person name="Shu S.Q."/>
            <person name="Stapleton M."/>
            <person name="Yamada C."/>
            <person name="Ashburner M."/>
            <person name="Gelbart W.M."/>
            <person name="Rubin G.M."/>
            <person name="Lewis S.E."/>
        </authorList>
    </citation>
    <scope>GENOME REANNOTATION</scope>
    <source>
        <strain evidence="19">Berkeley</strain>
    </source>
</reference>
<reference evidence="19" key="3">
    <citation type="journal article" date="2007" name="Science">
        <title>Sequence finishing and mapping of Drosophila melanogaster heterochromatin.</title>
        <authorList>
            <person name="Hoskins R.A."/>
            <person name="Carlson J.W."/>
            <person name="Kennedy C."/>
            <person name="Acevedo D."/>
            <person name="Evans-Holm M."/>
            <person name="Frise E."/>
            <person name="Wan K.H."/>
            <person name="Park S."/>
            <person name="Mendez-Lago M."/>
            <person name="Rossi F."/>
            <person name="Villasante A."/>
            <person name="Dimitri P."/>
            <person name="Karpen G.H."/>
            <person name="Celniker S.E."/>
        </authorList>
    </citation>
    <scope>NUCLEOTIDE SEQUENCE [LARGE SCALE GENOMIC DNA]</scope>
    <source>
        <strain evidence="19">Berkeley</strain>
    </source>
</reference>
<reference evidence="16" key="4">
    <citation type="submission" date="2005-10" db="EMBL/GenBank/DDBJ databases">
        <authorList>
            <person name="Stapleton M."/>
            <person name="Carlson J."/>
            <person name="Chavez C."/>
            <person name="Frise E."/>
            <person name="George R."/>
            <person name="Pacleb J."/>
            <person name="Park S."/>
            <person name="Wan K."/>
            <person name="Yu C."/>
            <person name="Celniker S."/>
        </authorList>
    </citation>
    <scope>NUCLEOTIDE SEQUENCE [MRNA]</scope>
    <source>
        <strain evidence="16">Berkeley</strain>
    </source>
</reference>
<reference evidence="17" key="5">
    <citation type="submission" date="2020-04" db="EMBL/GenBank/DDBJ databases">
        <title>Drosophila melanogaster release 4 sequence.</title>
        <authorList>
            <consortium name="Berkeley Drosophila Genome Project"/>
            <person name="Celniker S."/>
            <person name="Carlson J."/>
            <person name="Wan K."/>
            <person name="Pfeiffer B."/>
            <person name="Frise E."/>
            <person name="George R."/>
            <person name="Hoskins R."/>
            <person name="Stapleton M."/>
            <person name="Pacleb J."/>
            <person name="Park S."/>
            <person name="Svirskas R."/>
            <person name="Smith E."/>
            <person name="Yu C."/>
            <person name="Rubin G."/>
        </authorList>
    </citation>
    <scope>NUCLEOTIDE SEQUENCE [GENOMIC DNA]</scope>
</reference>
<reference evidence="15" key="6">
    <citation type="journal article" date="2007" name="FEBS Lett.">
        <title>Neurexin-1 is required for synapse formation and larvae associative learning in Drosophila.</title>
        <authorList>
            <person name="Zeng X."/>
            <person name="Sun M."/>
            <person name="Liu L."/>
            <person name="Chen F."/>
            <person name="Wei L."/>
            <person name="Xie W."/>
        </authorList>
    </citation>
    <scope>FUNCTION</scope>
    <scope>TISSUE SPECIFICITY</scope>
    <scope>DEVELOPMENTAL STAGE</scope>
    <scope>DISRUPTION PHENOTYPE</scope>
</reference>
<reference key="7">
    <citation type="journal article" date="2007" name="Neuron">
        <title>Crucial role of Drosophila neurexin in proper active zone apposition to postsynaptic densities, synaptic growth, and synaptic transmission.</title>
        <authorList>
            <person name="Li J."/>
            <person name="Ashley J."/>
            <person name="Budnik V."/>
            <person name="Bhat M.A."/>
        </authorList>
    </citation>
    <scope>FUNCTION</scope>
    <scope>SUBCELLULAR LOCATION</scope>
    <scope>DEVELOPMENTAL STAGE</scope>
    <scope>DISRUPTION PHENOTYPE</scope>
</reference>
<reference evidence="15" key="8">
    <citation type="journal article" date="2009" name="Neurosci. Res.">
        <title>Genetic interaction between Neurexin and CAKI/CMG is important for synaptic function in Drosophila neuromuscular junction.</title>
        <authorList>
            <person name="Sun M."/>
            <person name="Liu L."/>
            <person name="Zeng X."/>
            <person name="Xu M."/>
            <person name="Liu L."/>
            <person name="Fang M."/>
            <person name="Xie W."/>
        </authorList>
    </citation>
    <scope>FUNCTION</scope>
    <scope>INTERACTION WITH CASK</scope>
    <scope>SUBCELLULAR LOCATION</scope>
    <scope>DEVELOPMENTAL STAGE</scope>
    <scope>DISRUPTION PHENOTYPE</scope>
    <scope>MUTAGENESIS OF 1837-GLU--VAL-1840</scope>
</reference>
<reference evidence="15" key="9">
    <citation type="journal article" date="2010" name="PLoS ONE">
        <title>Neurexin in embryonic Drosophila neuromuscular junctions.</title>
        <authorList>
            <person name="Chen K."/>
            <person name="Gracheva E.O."/>
            <person name="Yu S.C."/>
            <person name="Sheng Q."/>
            <person name="Richmond J."/>
            <person name="Featherstone D.E."/>
        </authorList>
    </citation>
    <scope>FUNCTION</scope>
    <scope>SUBCELLULAR LOCATION</scope>
    <scope>DEVELOPMENTAL STAGE</scope>
    <scope>DISRUPTION PHENOTYPE</scope>
    <scope>TOPOLOGY</scope>
</reference>
<reference evidence="15" key="10">
    <citation type="journal article" date="2012" name="Nat. Neurosci.">
        <title>Cooperation of Syd-1 with Neurexin synchronizes pre- with postsynaptic assembly.</title>
        <authorList>
            <person name="Owald D."/>
            <person name="Khorramshahi O."/>
            <person name="Gupta V.K."/>
            <person name="Banovic D."/>
            <person name="Depner H."/>
            <person name="Fouquet W."/>
            <person name="Wichmann C."/>
            <person name="Mertel S."/>
            <person name="Eimer S."/>
            <person name="Reynolds E."/>
            <person name="Holt M."/>
            <person name="Aberle H."/>
            <person name="Sigrist S.J."/>
        </authorList>
    </citation>
    <scope>FUNCTION</scope>
    <scope>INTERACTION WITH RHOGAP100F/SYD-1</scope>
    <scope>SUBCELLULAR LOCATION</scope>
    <scope>DISRUPTION PHENOTYPE</scope>
</reference>
<reference evidence="15" key="11">
    <citation type="journal article" date="2013" name="Neuron">
        <title>Neurexin regulates visual function via mediating retinoid transport to promote rhodopsin maturation.</title>
        <authorList>
            <person name="Tian Y."/>
            <person name="Li T."/>
            <person name="Sun M."/>
            <person name="Wan D."/>
            <person name="Li Q."/>
            <person name="Li P."/>
            <person name="Zhang Z.C."/>
            <person name="Han J."/>
            <person name="Xie W."/>
        </authorList>
    </citation>
    <scope>FUNCTION</scope>
    <scope>INTERACTION WITH APOLPP/APOLI</scope>
    <scope>TISSUE SPECIFICITY</scope>
    <scope>DOMAIN</scope>
    <scope>DISRUPTION PHENOTYPE</scope>
</reference>
<reference evidence="15" key="12">
    <citation type="journal article" date="2015" name="Eur. J. Neurosci.">
        <title>Neurexin-1 regulates sleep and synaptic plasticity in Drosophila melanogaster.</title>
        <authorList>
            <person name="Larkin A."/>
            <person name="Chen M.Y."/>
            <person name="Kirszenblat L."/>
            <person name="Reinhard J."/>
            <person name="van Swinderen B."/>
            <person name="Claudianos C."/>
        </authorList>
    </citation>
    <scope>FUNCTION</scope>
    <scope>DISRUPTION PHENOTYPE</scope>
</reference>
<reference evidence="20" key="13">
    <citation type="journal article" date="2015" name="Nat. Commun.">
        <title>Presynaptic spinophilin tunes neurexin signalling to control active zone architecture and function.</title>
        <authorList>
            <person name="Muhammad K."/>
            <person name="Reddy-Alla S."/>
            <person name="Driller J.H."/>
            <person name="Schreiner D."/>
            <person name="Rey U."/>
            <person name="Bohme M.A."/>
            <person name="Hollmann C."/>
            <person name="Ramesh N."/>
            <person name="Depner H."/>
            <person name="Lutzkendorf J."/>
            <person name="Matkovic T."/>
            <person name="Gotz T."/>
            <person name="Bergeron D.D."/>
            <person name="Schmoranzer J."/>
            <person name="Goettfert F."/>
            <person name="Holt M."/>
            <person name="Wahl M.C."/>
            <person name="Hell S.W."/>
            <person name="Scheiffele P."/>
            <person name="Walter A.M."/>
            <person name="Loll B."/>
            <person name="Sigrist S.J."/>
        </authorList>
    </citation>
    <scope>X-RAY CRYSTALLOGRAPHY (1.23 ANGSTROMS) OF 1831-1840 IN COMPLEX WITH SPINOPHILIN AND ZINC</scope>
    <scope>FUNCTION</scope>
    <scope>INTERACTION WITH SPN/SPINOPHILIN</scope>
</reference>
<organism evidence="16">
    <name type="scientific">Drosophila melanogaster</name>
    <name type="common">Fruit fly</name>
    <dbReference type="NCBI Taxonomy" id="7227"/>
    <lineage>
        <taxon>Eukaryota</taxon>
        <taxon>Metazoa</taxon>
        <taxon>Ecdysozoa</taxon>
        <taxon>Arthropoda</taxon>
        <taxon>Hexapoda</taxon>
        <taxon>Insecta</taxon>
        <taxon>Pterygota</taxon>
        <taxon>Neoptera</taxon>
        <taxon>Endopterygota</taxon>
        <taxon>Diptera</taxon>
        <taxon>Brachycera</taxon>
        <taxon>Muscomorpha</taxon>
        <taxon>Ephydroidea</taxon>
        <taxon>Drosophilidae</taxon>
        <taxon>Drosophila</taxon>
        <taxon>Sophophora</taxon>
    </lineage>
</organism>
<protein>
    <recommendedName>
        <fullName evidence="13">Neurexin 1</fullName>
    </recommendedName>
</protein>